<evidence type="ECO:0000250" key="1">
    <source>
        <dbReference type="UniProtKB" id="P00442"/>
    </source>
</evidence>
<evidence type="ECO:0000250" key="2">
    <source>
        <dbReference type="UniProtKB" id="P00445"/>
    </source>
</evidence>
<evidence type="ECO:0000250" key="3">
    <source>
        <dbReference type="UniProtKB" id="P85978"/>
    </source>
</evidence>
<evidence type="ECO:0000305" key="4"/>
<comment type="function">
    <text evidence="1">Destroys radicals which are normally produced within the cells and which are toxic to biological systems.</text>
</comment>
<comment type="catalytic activity">
    <reaction evidence="3">
        <text>2 superoxide + 2 H(+) = H2O2 + O2</text>
        <dbReference type="Rhea" id="RHEA:20696"/>
        <dbReference type="ChEBI" id="CHEBI:15378"/>
        <dbReference type="ChEBI" id="CHEBI:15379"/>
        <dbReference type="ChEBI" id="CHEBI:16240"/>
        <dbReference type="ChEBI" id="CHEBI:18421"/>
        <dbReference type="EC" id="1.15.1.1"/>
    </reaction>
</comment>
<comment type="cofactor">
    <cofactor evidence="2">
        <name>Cu cation</name>
        <dbReference type="ChEBI" id="CHEBI:23378"/>
    </cofactor>
    <text evidence="2">Binds 1 copper ion per subunit.</text>
</comment>
<comment type="cofactor">
    <cofactor evidence="2">
        <name>Zn(2+)</name>
        <dbReference type="ChEBI" id="CHEBI:29105"/>
    </cofactor>
    <text evidence="2">Binds 1 zinc ion per subunit.</text>
</comment>
<comment type="subunit">
    <text evidence="3">Homodimer.</text>
</comment>
<comment type="subcellular location">
    <subcellularLocation>
        <location evidence="2">Cytoplasm</location>
    </subcellularLocation>
</comment>
<comment type="similarity">
    <text evidence="4">Belongs to the Cu-Zn superoxide dismutase family.</text>
</comment>
<gene>
    <name type="primary">SOD1</name>
    <name type="ORF">CPUR_07438</name>
</gene>
<feature type="initiator methionine" description="Removed" evidence="2">
    <location>
        <position position="1"/>
    </location>
</feature>
<feature type="chain" id="PRO_0000164114" description="Superoxide dismutase [Cu-Zn]">
    <location>
        <begin position="2"/>
        <end position="154"/>
    </location>
</feature>
<feature type="binding site" evidence="2">
    <location>
        <position position="47"/>
    </location>
    <ligand>
        <name>Cu cation</name>
        <dbReference type="ChEBI" id="CHEBI:23378"/>
        <note>catalytic</note>
    </ligand>
</feature>
<feature type="binding site" evidence="2">
    <location>
        <position position="49"/>
    </location>
    <ligand>
        <name>Cu cation</name>
        <dbReference type="ChEBI" id="CHEBI:23378"/>
        <note>catalytic</note>
    </ligand>
</feature>
<feature type="binding site" evidence="2">
    <location>
        <position position="64"/>
    </location>
    <ligand>
        <name>Cu cation</name>
        <dbReference type="ChEBI" id="CHEBI:23378"/>
        <note>catalytic</note>
    </ligand>
</feature>
<feature type="binding site" evidence="2">
    <location>
        <position position="64"/>
    </location>
    <ligand>
        <name>Zn(2+)</name>
        <dbReference type="ChEBI" id="CHEBI:29105"/>
        <note>structural</note>
    </ligand>
</feature>
<feature type="binding site" evidence="2">
    <location>
        <position position="72"/>
    </location>
    <ligand>
        <name>Zn(2+)</name>
        <dbReference type="ChEBI" id="CHEBI:29105"/>
        <note>structural</note>
    </ligand>
</feature>
<feature type="binding site" evidence="2">
    <location>
        <position position="81"/>
    </location>
    <ligand>
        <name>Zn(2+)</name>
        <dbReference type="ChEBI" id="CHEBI:29105"/>
        <note>structural</note>
    </ligand>
</feature>
<feature type="binding site" evidence="2">
    <location>
        <position position="84"/>
    </location>
    <ligand>
        <name>Zn(2+)</name>
        <dbReference type="ChEBI" id="CHEBI:29105"/>
        <note>structural</note>
    </ligand>
</feature>
<feature type="binding site" evidence="2">
    <location>
        <position position="121"/>
    </location>
    <ligand>
        <name>Cu cation</name>
        <dbReference type="ChEBI" id="CHEBI:23378"/>
        <note>catalytic</note>
    </ligand>
</feature>
<feature type="binding site" evidence="2">
    <location>
        <position position="144"/>
    </location>
    <ligand>
        <name>substrate</name>
    </ligand>
</feature>
<feature type="disulfide bond" evidence="2">
    <location>
        <begin position="58"/>
        <end position="147"/>
    </location>
</feature>
<reference key="1">
    <citation type="journal article" date="2002" name="Mol. Plant Pathol.">
        <title>The major Cu,Zn SOD of the phytopathogen Claviceps purpurea is not essential for pathogenicity.</title>
        <authorList>
            <person name="Moore S.M."/>
            <person name="de Vries O.M.H."/>
            <person name="Tudzynski P."/>
        </authorList>
        <dbReference type="AGRICOLA" id="IND23266367"/>
    </citation>
    <scope>NUCLEOTIDE SEQUENCE [GENOMIC DNA]</scope>
    <source>
        <strain>T5</strain>
    </source>
</reference>
<reference key="2">
    <citation type="journal article" date="2013" name="PLoS Genet.">
        <title>Plant-symbiotic fungi as chemical engineers: Multi-genome analysis of the Clavicipitaceae reveals dynamics of alkaloid loci.</title>
        <authorList>
            <person name="Schardl C.L."/>
            <person name="Young C.A."/>
            <person name="Hesse U."/>
            <person name="Amyotte S.G."/>
            <person name="Andreeva K."/>
            <person name="Calie P.J."/>
            <person name="Fleetwood D.J."/>
            <person name="Haws D.C."/>
            <person name="Moore N."/>
            <person name="Oeser B."/>
            <person name="Panaccione D.G."/>
            <person name="Schweri K.K."/>
            <person name="Voisey C.R."/>
            <person name="Farman M.L."/>
            <person name="Jaromczyk J.W."/>
            <person name="Roe B.A."/>
            <person name="O'Sullivan D.M."/>
            <person name="Scott B."/>
            <person name="Tudzynski P."/>
            <person name="An Z."/>
            <person name="Arnaoudova E.G."/>
            <person name="Bullock C.T."/>
            <person name="Charlton N.D."/>
            <person name="Chen L."/>
            <person name="Cox M."/>
            <person name="Dinkins R.D."/>
            <person name="Florea S."/>
            <person name="Glenn A.E."/>
            <person name="Gordon A."/>
            <person name="Gueldener U."/>
            <person name="Harris D.R."/>
            <person name="Hollin W."/>
            <person name="Jaromczyk J."/>
            <person name="Johnson R.D."/>
            <person name="Khan A.K."/>
            <person name="Leistner E."/>
            <person name="Leuchtmann A."/>
            <person name="Li C."/>
            <person name="Liu J."/>
            <person name="Liu J."/>
            <person name="Liu M."/>
            <person name="Mace W."/>
            <person name="Machado C."/>
            <person name="Nagabhyru P."/>
            <person name="Pan J."/>
            <person name="Schmid J."/>
            <person name="Sugawara K."/>
            <person name="Steiner U."/>
            <person name="Takach J.E."/>
            <person name="Tanaka E."/>
            <person name="Webb J.S."/>
            <person name="Wilson E.V."/>
            <person name="Wiseman J.L."/>
            <person name="Yoshida R."/>
            <person name="Zeng Z."/>
        </authorList>
    </citation>
    <scope>NUCLEOTIDE SEQUENCE [LARGE SCALE GENOMIC DNA]</scope>
    <source>
        <strain>20.1</strain>
    </source>
</reference>
<protein>
    <recommendedName>
        <fullName>Superoxide dismutase [Cu-Zn]</fullName>
        <ecNumber evidence="3">1.15.1.1</ecNumber>
    </recommendedName>
</protein>
<organism>
    <name type="scientific">Claviceps purpurea (strain 20.1)</name>
    <name type="common">Ergot fungus</name>
    <name type="synonym">Sphacelia segetum</name>
    <dbReference type="NCBI Taxonomy" id="1111077"/>
    <lineage>
        <taxon>Eukaryota</taxon>
        <taxon>Fungi</taxon>
        <taxon>Dikarya</taxon>
        <taxon>Ascomycota</taxon>
        <taxon>Pezizomycotina</taxon>
        <taxon>Sordariomycetes</taxon>
        <taxon>Hypocreomycetidae</taxon>
        <taxon>Hypocreales</taxon>
        <taxon>Clavicipitaceae</taxon>
        <taxon>Claviceps</taxon>
    </lineage>
</organism>
<name>SODC_CLAP2</name>
<proteinExistence type="inferred from homology"/>
<keyword id="KW-0049">Antioxidant</keyword>
<keyword id="KW-0186">Copper</keyword>
<keyword id="KW-0963">Cytoplasm</keyword>
<keyword id="KW-1015">Disulfide bond</keyword>
<keyword id="KW-0479">Metal-binding</keyword>
<keyword id="KW-0560">Oxidoreductase</keyword>
<keyword id="KW-1185">Reference proteome</keyword>
<keyword id="KW-0862">Zinc</keyword>
<accession>Q96VL0</accession>
<accession>M1WFC5</accession>
<dbReference type="EC" id="1.15.1.1" evidence="3"/>
<dbReference type="EMBL" id="AJ344050">
    <property type="protein sequence ID" value="CAC50073.1"/>
    <property type="molecule type" value="Genomic_DNA"/>
</dbReference>
<dbReference type="EMBL" id="CAGA01000060">
    <property type="protein sequence ID" value="CCE33513.1"/>
    <property type="molecule type" value="Genomic_DNA"/>
</dbReference>
<dbReference type="SMR" id="Q96VL0"/>
<dbReference type="STRING" id="1111077.Q96VL0"/>
<dbReference type="VEuPathDB" id="FungiDB:CPUR_07438"/>
<dbReference type="eggNOG" id="KOG0441">
    <property type="taxonomic scope" value="Eukaryota"/>
</dbReference>
<dbReference type="HOGENOM" id="CLU_056632_4_1_1"/>
<dbReference type="OrthoDB" id="2015551at2759"/>
<dbReference type="PhylomeDB" id="Q96VL0"/>
<dbReference type="PHI-base" id="PHI:769"/>
<dbReference type="Proteomes" id="UP000016801">
    <property type="component" value="Unassembled WGS sequence"/>
</dbReference>
<dbReference type="GO" id="GO:0005829">
    <property type="term" value="C:cytosol"/>
    <property type="evidence" value="ECO:0007669"/>
    <property type="project" value="EnsemblFungi"/>
</dbReference>
<dbReference type="GO" id="GO:0005758">
    <property type="term" value="C:mitochondrial intermembrane space"/>
    <property type="evidence" value="ECO:0007669"/>
    <property type="project" value="EnsemblFungi"/>
</dbReference>
<dbReference type="GO" id="GO:0005634">
    <property type="term" value="C:nucleus"/>
    <property type="evidence" value="ECO:0007669"/>
    <property type="project" value="EnsemblFungi"/>
</dbReference>
<dbReference type="GO" id="GO:1902693">
    <property type="term" value="C:superoxide dismutase complex"/>
    <property type="evidence" value="ECO:0007669"/>
    <property type="project" value="EnsemblFungi"/>
</dbReference>
<dbReference type="GO" id="GO:0005507">
    <property type="term" value="F:copper ion binding"/>
    <property type="evidence" value="ECO:0007669"/>
    <property type="project" value="InterPro"/>
</dbReference>
<dbReference type="GO" id="GO:0016670">
    <property type="term" value="F:oxidoreductase activity, acting on a sulfur group of donors, oxygen as acceptor"/>
    <property type="evidence" value="ECO:0007669"/>
    <property type="project" value="EnsemblFungi"/>
</dbReference>
<dbReference type="GO" id="GO:0004784">
    <property type="term" value="F:superoxide dismutase activity"/>
    <property type="evidence" value="ECO:0007669"/>
    <property type="project" value="UniProtKB-EC"/>
</dbReference>
<dbReference type="GO" id="GO:0045454">
    <property type="term" value="P:cell redox homeostasis"/>
    <property type="evidence" value="ECO:0007669"/>
    <property type="project" value="EnsemblFungi"/>
</dbReference>
<dbReference type="GO" id="GO:0006825">
    <property type="term" value="P:copper ion transport"/>
    <property type="evidence" value="ECO:0007669"/>
    <property type="project" value="EnsemblFungi"/>
</dbReference>
<dbReference type="GO" id="GO:0031505">
    <property type="term" value="P:fungal-type cell wall organization"/>
    <property type="evidence" value="ECO:0007669"/>
    <property type="project" value="EnsemblFungi"/>
</dbReference>
<dbReference type="GO" id="GO:0006878">
    <property type="term" value="P:intracellular copper ion homeostasis"/>
    <property type="evidence" value="ECO:0007669"/>
    <property type="project" value="EnsemblFungi"/>
</dbReference>
<dbReference type="GO" id="GO:0006882">
    <property type="term" value="P:intracellular zinc ion homeostasis"/>
    <property type="evidence" value="ECO:0007669"/>
    <property type="project" value="EnsemblFungi"/>
</dbReference>
<dbReference type="GO" id="GO:1901856">
    <property type="term" value="P:negative regulation of cellular respiration"/>
    <property type="evidence" value="ECO:0007669"/>
    <property type="project" value="EnsemblFungi"/>
</dbReference>
<dbReference type="GO" id="GO:0045944">
    <property type="term" value="P:positive regulation of transcription by RNA polymerase II"/>
    <property type="evidence" value="ECO:0007669"/>
    <property type="project" value="EnsemblFungi"/>
</dbReference>
<dbReference type="GO" id="GO:0050821">
    <property type="term" value="P:protein stabilization"/>
    <property type="evidence" value="ECO:0007669"/>
    <property type="project" value="EnsemblFungi"/>
</dbReference>
<dbReference type="CDD" id="cd00305">
    <property type="entry name" value="Cu-Zn_Superoxide_Dismutase"/>
    <property type="match status" value="1"/>
</dbReference>
<dbReference type="FunFam" id="2.60.40.200:FF:000001">
    <property type="entry name" value="Superoxide dismutase [Cu-Zn]"/>
    <property type="match status" value="1"/>
</dbReference>
<dbReference type="Gene3D" id="2.60.40.200">
    <property type="entry name" value="Superoxide dismutase, copper/zinc binding domain"/>
    <property type="match status" value="1"/>
</dbReference>
<dbReference type="InterPro" id="IPR036423">
    <property type="entry name" value="SOD-like_Cu/Zn_dom_sf"/>
</dbReference>
<dbReference type="InterPro" id="IPR024134">
    <property type="entry name" value="SOD_Cu/Zn_/chaperone"/>
</dbReference>
<dbReference type="InterPro" id="IPR018152">
    <property type="entry name" value="SOD_Cu/Zn_BS"/>
</dbReference>
<dbReference type="InterPro" id="IPR001424">
    <property type="entry name" value="SOD_Cu_Zn_dom"/>
</dbReference>
<dbReference type="PANTHER" id="PTHR10003">
    <property type="entry name" value="SUPEROXIDE DISMUTASE CU-ZN -RELATED"/>
    <property type="match status" value="1"/>
</dbReference>
<dbReference type="Pfam" id="PF00080">
    <property type="entry name" value="Sod_Cu"/>
    <property type="match status" value="1"/>
</dbReference>
<dbReference type="PRINTS" id="PR00068">
    <property type="entry name" value="CUZNDISMTASE"/>
</dbReference>
<dbReference type="SUPFAM" id="SSF49329">
    <property type="entry name" value="Cu,Zn superoxide dismutase-like"/>
    <property type="match status" value="1"/>
</dbReference>
<dbReference type="PROSITE" id="PS00087">
    <property type="entry name" value="SOD_CU_ZN_1"/>
    <property type="match status" value="1"/>
</dbReference>
<dbReference type="PROSITE" id="PS00332">
    <property type="entry name" value="SOD_CU_ZN_2"/>
    <property type="match status" value="1"/>
</dbReference>
<sequence>MVKAVAVLRGDAKVGGTVVFEQESESAPTTITWDITGNDANAKRGFHIHTFGDNTNGCTSAGPHFNPHGKTHGAPTDEARHVGDLGNLETDGQGNAKGSVKDEHVKLIGPHSVIGRTVVIHAGTDDLGKGDNEESLKTGNAGPRPACGVIGISS</sequence>